<keyword id="KW-0175">Coiled coil</keyword>
<keyword id="KW-0963">Cytoplasm</keyword>
<keyword id="KW-0469">Meiosis</keyword>
<keyword id="KW-1185">Reference proteome</keyword>
<feature type="chain" id="PRO_0000278517" description="Meiotically up-regulated gene 172 protein">
    <location>
        <begin position="1"/>
        <end position="331"/>
    </location>
</feature>
<feature type="coiled-coil region" evidence="1">
    <location>
        <begin position="72"/>
        <end position="166"/>
    </location>
</feature>
<name>MU172_SCHPO</name>
<comment type="function">
    <text evidence="2">Has a role in meiosis.</text>
</comment>
<comment type="subcellular location">
    <subcellularLocation>
        <location evidence="3">Cytoplasm</location>
    </subcellularLocation>
</comment>
<comment type="similarity">
    <text evidence="4">Belongs to the ADIP family.</text>
</comment>
<proteinExistence type="evidence at protein level"/>
<organism>
    <name type="scientific">Schizosaccharomyces pombe (strain 972 / ATCC 24843)</name>
    <name type="common">Fission yeast</name>
    <dbReference type="NCBI Taxonomy" id="284812"/>
    <lineage>
        <taxon>Eukaryota</taxon>
        <taxon>Fungi</taxon>
        <taxon>Dikarya</taxon>
        <taxon>Ascomycota</taxon>
        <taxon>Taphrinomycotina</taxon>
        <taxon>Schizosaccharomycetes</taxon>
        <taxon>Schizosaccharomycetales</taxon>
        <taxon>Schizosaccharomycetaceae</taxon>
        <taxon>Schizosaccharomyces</taxon>
    </lineage>
</organism>
<gene>
    <name type="primary">mug172</name>
    <name type="ORF">SPBC13E7.06</name>
</gene>
<evidence type="ECO:0000255" key="1"/>
<evidence type="ECO:0000269" key="2">
    <source>
    </source>
</evidence>
<evidence type="ECO:0000269" key="3">
    <source>
    </source>
</evidence>
<evidence type="ECO:0000305" key="4"/>
<protein>
    <recommendedName>
        <fullName>Meiotically up-regulated gene 172 protein</fullName>
    </recommendedName>
</protein>
<reference key="1">
    <citation type="journal article" date="2002" name="Nature">
        <title>The genome sequence of Schizosaccharomyces pombe.</title>
        <authorList>
            <person name="Wood V."/>
            <person name="Gwilliam R."/>
            <person name="Rajandream M.A."/>
            <person name="Lyne M.H."/>
            <person name="Lyne R."/>
            <person name="Stewart A."/>
            <person name="Sgouros J.G."/>
            <person name="Peat N."/>
            <person name="Hayles J."/>
            <person name="Baker S.G."/>
            <person name="Basham D."/>
            <person name="Bowman S."/>
            <person name="Brooks K."/>
            <person name="Brown D."/>
            <person name="Brown S."/>
            <person name="Chillingworth T."/>
            <person name="Churcher C.M."/>
            <person name="Collins M."/>
            <person name="Connor R."/>
            <person name="Cronin A."/>
            <person name="Davis P."/>
            <person name="Feltwell T."/>
            <person name="Fraser A."/>
            <person name="Gentles S."/>
            <person name="Goble A."/>
            <person name="Hamlin N."/>
            <person name="Harris D.E."/>
            <person name="Hidalgo J."/>
            <person name="Hodgson G."/>
            <person name="Holroyd S."/>
            <person name="Hornsby T."/>
            <person name="Howarth S."/>
            <person name="Huckle E.J."/>
            <person name="Hunt S."/>
            <person name="Jagels K."/>
            <person name="James K.D."/>
            <person name="Jones L."/>
            <person name="Jones M."/>
            <person name="Leather S."/>
            <person name="McDonald S."/>
            <person name="McLean J."/>
            <person name="Mooney P."/>
            <person name="Moule S."/>
            <person name="Mungall K.L."/>
            <person name="Murphy L.D."/>
            <person name="Niblett D."/>
            <person name="Odell C."/>
            <person name="Oliver K."/>
            <person name="O'Neil S."/>
            <person name="Pearson D."/>
            <person name="Quail M.A."/>
            <person name="Rabbinowitsch E."/>
            <person name="Rutherford K.M."/>
            <person name="Rutter S."/>
            <person name="Saunders D."/>
            <person name="Seeger K."/>
            <person name="Sharp S."/>
            <person name="Skelton J."/>
            <person name="Simmonds M.N."/>
            <person name="Squares R."/>
            <person name="Squares S."/>
            <person name="Stevens K."/>
            <person name="Taylor K."/>
            <person name="Taylor R.G."/>
            <person name="Tivey A."/>
            <person name="Walsh S.V."/>
            <person name="Warren T."/>
            <person name="Whitehead S."/>
            <person name="Woodward J.R."/>
            <person name="Volckaert G."/>
            <person name="Aert R."/>
            <person name="Robben J."/>
            <person name="Grymonprez B."/>
            <person name="Weltjens I."/>
            <person name="Vanstreels E."/>
            <person name="Rieger M."/>
            <person name="Schaefer M."/>
            <person name="Mueller-Auer S."/>
            <person name="Gabel C."/>
            <person name="Fuchs M."/>
            <person name="Duesterhoeft A."/>
            <person name="Fritzc C."/>
            <person name="Holzer E."/>
            <person name="Moestl D."/>
            <person name="Hilbert H."/>
            <person name="Borzym K."/>
            <person name="Langer I."/>
            <person name="Beck A."/>
            <person name="Lehrach H."/>
            <person name="Reinhardt R."/>
            <person name="Pohl T.M."/>
            <person name="Eger P."/>
            <person name="Zimmermann W."/>
            <person name="Wedler H."/>
            <person name="Wambutt R."/>
            <person name="Purnelle B."/>
            <person name="Goffeau A."/>
            <person name="Cadieu E."/>
            <person name="Dreano S."/>
            <person name="Gloux S."/>
            <person name="Lelaure V."/>
            <person name="Mottier S."/>
            <person name="Galibert F."/>
            <person name="Aves S.J."/>
            <person name="Xiang Z."/>
            <person name="Hunt C."/>
            <person name="Moore K."/>
            <person name="Hurst S.M."/>
            <person name="Lucas M."/>
            <person name="Rochet M."/>
            <person name="Gaillardin C."/>
            <person name="Tallada V.A."/>
            <person name="Garzon A."/>
            <person name="Thode G."/>
            <person name="Daga R.R."/>
            <person name="Cruzado L."/>
            <person name="Jimenez J."/>
            <person name="Sanchez M."/>
            <person name="del Rey F."/>
            <person name="Benito J."/>
            <person name="Dominguez A."/>
            <person name="Revuelta J.L."/>
            <person name="Moreno S."/>
            <person name="Armstrong J."/>
            <person name="Forsburg S.L."/>
            <person name="Cerutti L."/>
            <person name="Lowe T."/>
            <person name="McCombie W.R."/>
            <person name="Paulsen I."/>
            <person name="Potashkin J."/>
            <person name="Shpakovski G.V."/>
            <person name="Ussery D."/>
            <person name="Barrell B.G."/>
            <person name="Nurse P."/>
        </authorList>
    </citation>
    <scope>NUCLEOTIDE SEQUENCE [LARGE SCALE GENOMIC DNA]</scope>
    <source>
        <strain>972 / ATCC 24843</strain>
    </source>
</reference>
<reference key="2">
    <citation type="journal article" date="2005" name="Curr. Biol.">
        <title>A large-scale screen in S. pombe identifies seven novel genes required for critical meiotic events.</title>
        <authorList>
            <person name="Martin-Castellanos C."/>
            <person name="Blanco M."/>
            <person name="Rozalen A.E."/>
            <person name="Perez-Hidalgo L."/>
            <person name="Garcia A.I."/>
            <person name="Conde F."/>
            <person name="Mata J."/>
            <person name="Ellermeier C."/>
            <person name="Davis L."/>
            <person name="San-Segundo P."/>
            <person name="Smith G.R."/>
            <person name="Moreno S."/>
        </authorList>
    </citation>
    <scope>FUNCTION IN MEIOSIS</scope>
</reference>
<reference key="3">
    <citation type="journal article" date="2006" name="Nat. Biotechnol.">
        <title>ORFeome cloning and global analysis of protein localization in the fission yeast Schizosaccharomyces pombe.</title>
        <authorList>
            <person name="Matsuyama A."/>
            <person name="Arai R."/>
            <person name="Yashiroda Y."/>
            <person name="Shirai A."/>
            <person name="Kamata A."/>
            <person name="Sekido S."/>
            <person name="Kobayashi Y."/>
            <person name="Hashimoto A."/>
            <person name="Hamamoto M."/>
            <person name="Hiraoka Y."/>
            <person name="Horinouchi S."/>
            <person name="Yoshida M."/>
        </authorList>
    </citation>
    <scope>SUBCELLULAR LOCATION [LARGE SCALE ANALYSIS]</scope>
</reference>
<dbReference type="EMBL" id="CU329671">
    <property type="protein sequence ID" value="CAB89881.1"/>
    <property type="molecule type" value="Genomic_DNA"/>
</dbReference>
<dbReference type="RefSeq" id="NP_596261.1">
    <property type="nucleotide sequence ID" value="NM_001022181.2"/>
</dbReference>
<dbReference type="SMR" id="Q9P6R4"/>
<dbReference type="BioGRID" id="276454">
    <property type="interactions" value="68"/>
</dbReference>
<dbReference type="STRING" id="284812.Q9P6R4"/>
<dbReference type="PaxDb" id="4896-SPBC13E7.06.1"/>
<dbReference type="EnsemblFungi" id="SPBC13E7.06.1">
    <property type="protein sequence ID" value="SPBC13E7.06.1:pep"/>
    <property type="gene ID" value="SPBC13E7.06"/>
</dbReference>
<dbReference type="GeneID" id="2539908"/>
<dbReference type="KEGG" id="spo:2539908"/>
<dbReference type="PomBase" id="SPBC13E7.06"/>
<dbReference type="VEuPathDB" id="FungiDB:SPBC13E7.06"/>
<dbReference type="HOGENOM" id="CLU_794913_0_0_1"/>
<dbReference type="InParanoid" id="Q9P6R4"/>
<dbReference type="OMA" id="HANAPIL"/>
<dbReference type="PhylomeDB" id="Q9P6R4"/>
<dbReference type="PRO" id="PR:Q9P6R4"/>
<dbReference type="Proteomes" id="UP000002485">
    <property type="component" value="Chromosome II"/>
</dbReference>
<dbReference type="GO" id="GO:0005737">
    <property type="term" value="C:cytoplasm"/>
    <property type="evidence" value="ECO:0007005"/>
    <property type="project" value="PomBase"/>
</dbReference>
<dbReference type="GO" id="GO:0072686">
    <property type="term" value="C:mitotic spindle"/>
    <property type="evidence" value="ECO:0000314"/>
    <property type="project" value="PomBase"/>
</dbReference>
<dbReference type="GO" id="GO:0044732">
    <property type="term" value="C:mitotic spindle pole body"/>
    <property type="evidence" value="ECO:0000314"/>
    <property type="project" value="PomBase"/>
</dbReference>
<dbReference type="GO" id="GO:1990811">
    <property type="term" value="C:MWP complex"/>
    <property type="evidence" value="ECO:0000314"/>
    <property type="project" value="PomBase"/>
</dbReference>
<dbReference type="GO" id="GO:0005634">
    <property type="term" value="C:nucleus"/>
    <property type="evidence" value="ECO:0000314"/>
    <property type="project" value="PomBase"/>
</dbReference>
<dbReference type="GO" id="GO:0140475">
    <property type="term" value="F:spindle pole body anchor activity"/>
    <property type="evidence" value="ECO:0000315"/>
    <property type="project" value="PomBase"/>
</dbReference>
<dbReference type="GO" id="GO:0051321">
    <property type="term" value="P:meiotic cell cycle"/>
    <property type="evidence" value="ECO:0007669"/>
    <property type="project" value="UniProtKB-KW"/>
</dbReference>
<dbReference type="GO" id="GO:1990810">
    <property type="term" value="P:microtubule anchoring at mitotic spindle pole body"/>
    <property type="evidence" value="ECO:0000315"/>
    <property type="project" value="PomBase"/>
</dbReference>
<dbReference type="GO" id="GO:0000070">
    <property type="term" value="P:mitotic sister chromatid segregation"/>
    <property type="evidence" value="ECO:0000315"/>
    <property type="project" value="PomBase"/>
</dbReference>
<dbReference type="InterPro" id="IPR021622">
    <property type="entry name" value="Afadin/alpha-actinin-bd"/>
</dbReference>
<dbReference type="Pfam" id="PF11559">
    <property type="entry name" value="ADIP"/>
    <property type="match status" value="1"/>
</dbReference>
<accession>Q9P6R4</accession>
<sequence length="331" mass="38449">MTTPIVFCNPSNIEESLLYINKSLFSKGVIQAEKLRLSHDIRDNCNIVNIIYRLLRATDEERLEKESLLDAIKNNEYEKQRDNNTIKRLKNELELYQNECQLQLNKVRTLERDQAELITQNKGLKDVNAKNELTLKALKNQLSVSLRQHEQQMETLKGNYGLVKARKGRNLNSMLIVKEPIKQNTNAPILPETASFLQQNDENSNFLNSRVNNDEFQLLKGLNNELKKSNGTLLTCLSGTLNSLVEMLSPLYERPNSNPFEVCELNAILLDAKIQNQLLFIRNLLHERKYVSIDELDAILEENEKNKHLINILQKENKRVFEFLTNMHDKF</sequence>